<reference key="1">
    <citation type="journal article" date="2006" name="Nat. Biotechnol.">
        <title>Complete genome sequence of the entomopathogenic and metabolically versatile soil bacterium Pseudomonas entomophila.</title>
        <authorList>
            <person name="Vodovar N."/>
            <person name="Vallenet D."/>
            <person name="Cruveiller S."/>
            <person name="Rouy Z."/>
            <person name="Barbe V."/>
            <person name="Acosta C."/>
            <person name="Cattolico L."/>
            <person name="Jubin C."/>
            <person name="Lajus A."/>
            <person name="Segurens B."/>
            <person name="Vacherie B."/>
            <person name="Wincker P."/>
            <person name="Weissenbach J."/>
            <person name="Lemaitre B."/>
            <person name="Medigue C."/>
            <person name="Boccard F."/>
        </authorList>
    </citation>
    <scope>NUCLEOTIDE SEQUENCE [LARGE SCALE GENOMIC DNA]</scope>
    <source>
        <strain>L48</strain>
    </source>
</reference>
<sequence>MKFVDEVSIRVKAGDGGNGCMSFRREKFIENGGPNGGDGGDGGSVYMVADENLNTLVDYRYTRHHEAQRGSNGGSTDCTGKKGDDLFLRVPVGTTVIDASTQEVIGDLITPGQKLMVAQGGWHGLGNTRFKSSTNRAPRQTTPGKPGDQRDLKMEMKVLADVGLLGLPNAGKSTFIRSVSAAKPKVADYPFTTLVPNLGVVSVDRWKSFVIADIPGLIEGASEGAGLGIRFLKHLARTRVLLHLVDLAPLDGSSPADAAEIIINELAQFSPALVDRERWLVLNKADMIMDDEKDERVKEVVERLNWEGPVYVISAIAKQGTEKLSHDLMRYLEDRADRLANDPAYAEELAELDQRIEDEARAQLQALDDARTLRRTGVKSVHDIGDDDDWDDFEDDEDGPEIIYVRD</sequence>
<name>OBG_PSEE4</name>
<proteinExistence type="inferred from homology"/>
<accession>Q1IF13</accession>
<protein>
    <recommendedName>
        <fullName evidence="1">GTPase Obg</fullName>
        <ecNumber evidence="1">3.6.5.-</ecNumber>
    </recommendedName>
    <alternativeName>
        <fullName evidence="1">GTP-binding protein Obg</fullName>
    </alternativeName>
</protein>
<dbReference type="EC" id="3.6.5.-" evidence="1"/>
<dbReference type="EMBL" id="CT573326">
    <property type="protein sequence ID" value="CAK13741.1"/>
    <property type="molecule type" value="Genomic_DNA"/>
</dbReference>
<dbReference type="RefSeq" id="WP_011532170.1">
    <property type="nucleotide sequence ID" value="NC_008027.1"/>
</dbReference>
<dbReference type="SMR" id="Q1IF13"/>
<dbReference type="STRING" id="384676.PSEEN0828"/>
<dbReference type="GeneID" id="32804133"/>
<dbReference type="KEGG" id="pen:PSEEN0828"/>
<dbReference type="eggNOG" id="COG0536">
    <property type="taxonomic scope" value="Bacteria"/>
</dbReference>
<dbReference type="HOGENOM" id="CLU_011747_2_0_6"/>
<dbReference type="OrthoDB" id="9807318at2"/>
<dbReference type="Proteomes" id="UP000000658">
    <property type="component" value="Chromosome"/>
</dbReference>
<dbReference type="GO" id="GO:0005737">
    <property type="term" value="C:cytoplasm"/>
    <property type="evidence" value="ECO:0007669"/>
    <property type="project" value="UniProtKB-SubCell"/>
</dbReference>
<dbReference type="GO" id="GO:0005525">
    <property type="term" value="F:GTP binding"/>
    <property type="evidence" value="ECO:0007669"/>
    <property type="project" value="UniProtKB-UniRule"/>
</dbReference>
<dbReference type="GO" id="GO:0003924">
    <property type="term" value="F:GTPase activity"/>
    <property type="evidence" value="ECO:0007669"/>
    <property type="project" value="UniProtKB-UniRule"/>
</dbReference>
<dbReference type="GO" id="GO:0000287">
    <property type="term" value="F:magnesium ion binding"/>
    <property type="evidence" value="ECO:0007669"/>
    <property type="project" value="InterPro"/>
</dbReference>
<dbReference type="GO" id="GO:0042254">
    <property type="term" value="P:ribosome biogenesis"/>
    <property type="evidence" value="ECO:0007669"/>
    <property type="project" value="UniProtKB-UniRule"/>
</dbReference>
<dbReference type="CDD" id="cd01898">
    <property type="entry name" value="Obg"/>
    <property type="match status" value="1"/>
</dbReference>
<dbReference type="FunFam" id="2.70.210.12:FF:000001">
    <property type="entry name" value="GTPase Obg"/>
    <property type="match status" value="1"/>
</dbReference>
<dbReference type="FunFam" id="3.40.50.300:FF:000185">
    <property type="entry name" value="GTPase Obg"/>
    <property type="match status" value="1"/>
</dbReference>
<dbReference type="Gene3D" id="2.70.210.12">
    <property type="entry name" value="GTP1/OBG domain"/>
    <property type="match status" value="1"/>
</dbReference>
<dbReference type="Gene3D" id="3.40.50.300">
    <property type="entry name" value="P-loop containing nucleotide triphosphate hydrolases"/>
    <property type="match status" value="1"/>
</dbReference>
<dbReference type="HAMAP" id="MF_01454">
    <property type="entry name" value="GTPase_Obg"/>
    <property type="match status" value="1"/>
</dbReference>
<dbReference type="InterPro" id="IPR031167">
    <property type="entry name" value="G_OBG"/>
</dbReference>
<dbReference type="InterPro" id="IPR006073">
    <property type="entry name" value="GTP-bd"/>
</dbReference>
<dbReference type="InterPro" id="IPR014100">
    <property type="entry name" value="GTP-bd_Obg/CgtA"/>
</dbReference>
<dbReference type="InterPro" id="IPR006074">
    <property type="entry name" value="GTP1-OBG_CS"/>
</dbReference>
<dbReference type="InterPro" id="IPR006169">
    <property type="entry name" value="GTP1_OBG_dom"/>
</dbReference>
<dbReference type="InterPro" id="IPR036726">
    <property type="entry name" value="GTP1_OBG_dom_sf"/>
</dbReference>
<dbReference type="InterPro" id="IPR045086">
    <property type="entry name" value="OBG_GTPase"/>
</dbReference>
<dbReference type="InterPro" id="IPR027417">
    <property type="entry name" value="P-loop_NTPase"/>
</dbReference>
<dbReference type="NCBIfam" id="TIGR02729">
    <property type="entry name" value="Obg_CgtA"/>
    <property type="match status" value="1"/>
</dbReference>
<dbReference type="NCBIfam" id="NF008955">
    <property type="entry name" value="PRK12297.1"/>
    <property type="match status" value="1"/>
</dbReference>
<dbReference type="NCBIfam" id="NF008956">
    <property type="entry name" value="PRK12299.1"/>
    <property type="match status" value="1"/>
</dbReference>
<dbReference type="PANTHER" id="PTHR11702">
    <property type="entry name" value="DEVELOPMENTALLY REGULATED GTP-BINDING PROTEIN-RELATED"/>
    <property type="match status" value="1"/>
</dbReference>
<dbReference type="PANTHER" id="PTHR11702:SF31">
    <property type="entry name" value="MITOCHONDRIAL RIBOSOME-ASSOCIATED GTPASE 2"/>
    <property type="match status" value="1"/>
</dbReference>
<dbReference type="Pfam" id="PF01018">
    <property type="entry name" value="GTP1_OBG"/>
    <property type="match status" value="1"/>
</dbReference>
<dbReference type="Pfam" id="PF01926">
    <property type="entry name" value="MMR_HSR1"/>
    <property type="match status" value="1"/>
</dbReference>
<dbReference type="PIRSF" id="PIRSF002401">
    <property type="entry name" value="GTP_bd_Obg/CgtA"/>
    <property type="match status" value="1"/>
</dbReference>
<dbReference type="PRINTS" id="PR00326">
    <property type="entry name" value="GTP1OBG"/>
</dbReference>
<dbReference type="SUPFAM" id="SSF82051">
    <property type="entry name" value="Obg GTP-binding protein N-terminal domain"/>
    <property type="match status" value="1"/>
</dbReference>
<dbReference type="SUPFAM" id="SSF52540">
    <property type="entry name" value="P-loop containing nucleoside triphosphate hydrolases"/>
    <property type="match status" value="1"/>
</dbReference>
<dbReference type="PROSITE" id="PS51710">
    <property type="entry name" value="G_OBG"/>
    <property type="match status" value="1"/>
</dbReference>
<dbReference type="PROSITE" id="PS00905">
    <property type="entry name" value="GTP1_OBG"/>
    <property type="match status" value="1"/>
</dbReference>
<dbReference type="PROSITE" id="PS51883">
    <property type="entry name" value="OBG"/>
    <property type="match status" value="1"/>
</dbReference>
<gene>
    <name evidence="1" type="primary">obg</name>
    <name type="ordered locus">PSEEN0828</name>
</gene>
<comment type="function">
    <text evidence="1">An essential GTPase which binds GTP, GDP and possibly (p)ppGpp with moderate affinity, with high nucleotide exchange rates and a fairly low GTP hydrolysis rate. Plays a role in control of the cell cycle, stress response, ribosome biogenesis and in those bacteria that undergo differentiation, in morphogenesis control.</text>
</comment>
<comment type="cofactor">
    <cofactor evidence="1">
        <name>Mg(2+)</name>
        <dbReference type="ChEBI" id="CHEBI:18420"/>
    </cofactor>
</comment>
<comment type="subunit">
    <text evidence="1">Monomer.</text>
</comment>
<comment type="subcellular location">
    <subcellularLocation>
        <location evidence="1">Cytoplasm</location>
    </subcellularLocation>
</comment>
<comment type="similarity">
    <text evidence="1">Belongs to the TRAFAC class OBG-HflX-like GTPase superfamily. OBG GTPase family.</text>
</comment>
<evidence type="ECO:0000255" key="1">
    <source>
        <dbReference type="HAMAP-Rule" id="MF_01454"/>
    </source>
</evidence>
<evidence type="ECO:0000255" key="2">
    <source>
        <dbReference type="PROSITE-ProRule" id="PRU01231"/>
    </source>
</evidence>
<evidence type="ECO:0000256" key="3">
    <source>
        <dbReference type="SAM" id="MobiDB-lite"/>
    </source>
</evidence>
<feature type="chain" id="PRO_0000386154" description="GTPase Obg">
    <location>
        <begin position="1"/>
        <end position="407"/>
    </location>
</feature>
<feature type="domain" description="Obg" evidence="2">
    <location>
        <begin position="1"/>
        <end position="159"/>
    </location>
</feature>
<feature type="domain" description="OBG-type G" evidence="1">
    <location>
        <begin position="160"/>
        <end position="333"/>
    </location>
</feature>
<feature type="region of interest" description="Disordered" evidence="3">
    <location>
        <begin position="127"/>
        <end position="150"/>
    </location>
</feature>
<feature type="region of interest" description="Disordered" evidence="3">
    <location>
        <begin position="378"/>
        <end position="407"/>
    </location>
</feature>
<feature type="compositionally biased region" description="Polar residues" evidence="3">
    <location>
        <begin position="129"/>
        <end position="143"/>
    </location>
</feature>
<feature type="compositionally biased region" description="Acidic residues" evidence="3">
    <location>
        <begin position="385"/>
        <end position="400"/>
    </location>
</feature>
<feature type="binding site" evidence="1">
    <location>
        <begin position="166"/>
        <end position="173"/>
    </location>
    <ligand>
        <name>GTP</name>
        <dbReference type="ChEBI" id="CHEBI:37565"/>
    </ligand>
</feature>
<feature type="binding site" evidence="1">
    <location>
        <position position="173"/>
    </location>
    <ligand>
        <name>Mg(2+)</name>
        <dbReference type="ChEBI" id="CHEBI:18420"/>
    </ligand>
</feature>
<feature type="binding site" evidence="1">
    <location>
        <begin position="191"/>
        <end position="195"/>
    </location>
    <ligand>
        <name>GTP</name>
        <dbReference type="ChEBI" id="CHEBI:37565"/>
    </ligand>
</feature>
<feature type="binding site" evidence="1">
    <location>
        <position position="193"/>
    </location>
    <ligand>
        <name>Mg(2+)</name>
        <dbReference type="ChEBI" id="CHEBI:18420"/>
    </ligand>
</feature>
<feature type="binding site" evidence="1">
    <location>
        <begin position="213"/>
        <end position="216"/>
    </location>
    <ligand>
        <name>GTP</name>
        <dbReference type="ChEBI" id="CHEBI:37565"/>
    </ligand>
</feature>
<feature type="binding site" evidence="1">
    <location>
        <begin position="283"/>
        <end position="286"/>
    </location>
    <ligand>
        <name>GTP</name>
        <dbReference type="ChEBI" id="CHEBI:37565"/>
    </ligand>
</feature>
<feature type="binding site" evidence="1">
    <location>
        <begin position="314"/>
        <end position="316"/>
    </location>
    <ligand>
        <name>GTP</name>
        <dbReference type="ChEBI" id="CHEBI:37565"/>
    </ligand>
</feature>
<organism>
    <name type="scientific">Pseudomonas entomophila (strain L48)</name>
    <dbReference type="NCBI Taxonomy" id="384676"/>
    <lineage>
        <taxon>Bacteria</taxon>
        <taxon>Pseudomonadati</taxon>
        <taxon>Pseudomonadota</taxon>
        <taxon>Gammaproteobacteria</taxon>
        <taxon>Pseudomonadales</taxon>
        <taxon>Pseudomonadaceae</taxon>
        <taxon>Pseudomonas</taxon>
    </lineage>
</organism>
<keyword id="KW-0963">Cytoplasm</keyword>
<keyword id="KW-0342">GTP-binding</keyword>
<keyword id="KW-0378">Hydrolase</keyword>
<keyword id="KW-0460">Magnesium</keyword>
<keyword id="KW-0479">Metal-binding</keyword>
<keyword id="KW-0547">Nucleotide-binding</keyword>